<keyword id="KW-0040">ANK repeat</keyword>
<keyword id="KW-0472">Membrane</keyword>
<keyword id="KW-1185">Reference proteome</keyword>
<keyword id="KW-0677">Repeat</keyword>
<keyword id="KW-0812">Transmembrane</keyword>
<keyword id="KW-1133">Transmembrane helix</keyword>
<sequence length="228" mass="25223">MSYVFVNDSSQTNVPLLQACIDGDFTYSKRLLESGFDPNIRDSRGRTGLHLAAARGNVDICQLLHKFGADPLATDYQGNTALHLCGHVDTIQFLVSNGLKIDICNHQGATPLVLAKRRGVNKDVIRLLESLEEQEVKGFNRGAHSKLETMQTAESESAMESHSLLNPNLQQGEGVLSSFRTTWQEFVEDLGFWRVLLLILVIALLSLGIAYYVSGVLPFVDNQPELVH</sequence>
<evidence type="ECO:0000255" key="1"/>
<evidence type="ECO:0000305" key="2"/>
<accession>Q8BTZ5</accession>
<accession>Q1LZK9</accession>
<accession>Q8BV97</accession>
<proteinExistence type="evidence at protein level"/>
<feature type="chain" id="PRO_0000244578" description="Ankyrin repeat domain-containing protein 46">
    <location>
        <begin position="1"/>
        <end position="228"/>
    </location>
</feature>
<feature type="transmembrane region" description="Helical" evidence="1">
    <location>
        <begin position="195"/>
        <end position="215"/>
    </location>
</feature>
<feature type="repeat" description="ANK 1">
    <location>
        <begin position="11"/>
        <end position="40"/>
    </location>
</feature>
<feature type="repeat" description="ANK 2">
    <location>
        <begin position="44"/>
        <end position="74"/>
    </location>
</feature>
<feature type="repeat" description="ANK 3">
    <location>
        <begin position="77"/>
        <end position="103"/>
    </location>
</feature>
<feature type="repeat" description="ANK 4">
    <location>
        <begin position="107"/>
        <end position="138"/>
    </location>
</feature>
<feature type="sequence conflict" description="In Ref. 3; AAI15843." evidence="2" ref="3">
    <original>C</original>
    <variation>W</variation>
    <location>
        <position position="104"/>
    </location>
</feature>
<protein>
    <recommendedName>
        <fullName>Ankyrin repeat domain-containing protein 46</fullName>
    </recommendedName>
    <alternativeName>
        <fullName>Ankyrin repeat small protein</fullName>
        <shortName>ANK-S</shortName>
    </alternativeName>
</protein>
<gene>
    <name type="primary">Ankrd46</name>
</gene>
<organism>
    <name type="scientific">Mus musculus</name>
    <name type="common">Mouse</name>
    <dbReference type="NCBI Taxonomy" id="10090"/>
    <lineage>
        <taxon>Eukaryota</taxon>
        <taxon>Metazoa</taxon>
        <taxon>Chordata</taxon>
        <taxon>Craniata</taxon>
        <taxon>Vertebrata</taxon>
        <taxon>Euteleostomi</taxon>
        <taxon>Mammalia</taxon>
        <taxon>Eutheria</taxon>
        <taxon>Euarchontoglires</taxon>
        <taxon>Glires</taxon>
        <taxon>Rodentia</taxon>
        <taxon>Myomorpha</taxon>
        <taxon>Muroidea</taxon>
        <taxon>Muridae</taxon>
        <taxon>Murinae</taxon>
        <taxon>Mus</taxon>
        <taxon>Mus</taxon>
    </lineage>
</organism>
<comment type="subcellular location">
    <subcellularLocation>
        <location evidence="2">Membrane</location>
        <topology evidence="2">Single-pass membrane protein</topology>
    </subcellularLocation>
</comment>
<reference key="1">
    <citation type="submission" date="2001-12" db="EMBL/GenBank/DDBJ databases">
        <title>A novel ankyrin-repeat containing gene expressed in SAMP8 hippocampus.</title>
        <authorList>
            <person name="Yamamura N."/>
            <person name="Koike N."/>
            <person name="Nomura Y."/>
            <person name="Sakaki Y."/>
            <person name="Tashiro T."/>
            <person name="Furihata C."/>
        </authorList>
    </citation>
    <scope>NUCLEOTIDE SEQUENCE [MRNA]</scope>
    <source>
        <strain>SAMP8</strain>
        <tissue>Hippocampus</tissue>
    </source>
</reference>
<reference key="2">
    <citation type="journal article" date="2005" name="Science">
        <title>The transcriptional landscape of the mammalian genome.</title>
        <authorList>
            <person name="Carninci P."/>
            <person name="Kasukawa T."/>
            <person name="Katayama S."/>
            <person name="Gough J."/>
            <person name="Frith M.C."/>
            <person name="Maeda N."/>
            <person name="Oyama R."/>
            <person name="Ravasi T."/>
            <person name="Lenhard B."/>
            <person name="Wells C."/>
            <person name="Kodzius R."/>
            <person name="Shimokawa K."/>
            <person name="Bajic V.B."/>
            <person name="Brenner S.E."/>
            <person name="Batalov S."/>
            <person name="Forrest A.R."/>
            <person name="Zavolan M."/>
            <person name="Davis M.J."/>
            <person name="Wilming L.G."/>
            <person name="Aidinis V."/>
            <person name="Allen J.E."/>
            <person name="Ambesi-Impiombato A."/>
            <person name="Apweiler R."/>
            <person name="Aturaliya R.N."/>
            <person name="Bailey T.L."/>
            <person name="Bansal M."/>
            <person name="Baxter L."/>
            <person name="Beisel K.W."/>
            <person name="Bersano T."/>
            <person name="Bono H."/>
            <person name="Chalk A.M."/>
            <person name="Chiu K.P."/>
            <person name="Choudhary V."/>
            <person name="Christoffels A."/>
            <person name="Clutterbuck D.R."/>
            <person name="Crowe M.L."/>
            <person name="Dalla E."/>
            <person name="Dalrymple B.P."/>
            <person name="de Bono B."/>
            <person name="Della Gatta G."/>
            <person name="di Bernardo D."/>
            <person name="Down T."/>
            <person name="Engstrom P."/>
            <person name="Fagiolini M."/>
            <person name="Faulkner G."/>
            <person name="Fletcher C.F."/>
            <person name="Fukushima T."/>
            <person name="Furuno M."/>
            <person name="Futaki S."/>
            <person name="Gariboldi M."/>
            <person name="Georgii-Hemming P."/>
            <person name="Gingeras T.R."/>
            <person name="Gojobori T."/>
            <person name="Green R.E."/>
            <person name="Gustincich S."/>
            <person name="Harbers M."/>
            <person name="Hayashi Y."/>
            <person name="Hensch T.K."/>
            <person name="Hirokawa N."/>
            <person name="Hill D."/>
            <person name="Huminiecki L."/>
            <person name="Iacono M."/>
            <person name="Ikeo K."/>
            <person name="Iwama A."/>
            <person name="Ishikawa T."/>
            <person name="Jakt M."/>
            <person name="Kanapin A."/>
            <person name="Katoh M."/>
            <person name="Kawasawa Y."/>
            <person name="Kelso J."/>
            <person name="Kitamura H."/>
            <person name="Kitano H."/>
            <person name="Kollias G."/>
            <person name="Krishnan S.P."/>
            <person name="Kruger A."/>
            <person name="Kummerfeld S.K."/>
            <person name="Kurochkin I.V."/>
            <person name="Lareau L.F."/>
            <person name="Lazarevic D."/>
            <person name="Lipovich L."/>
            <person name="Liu J."/>
            <person name="Liuni S."/>
            <person name="McWilliam S."/>
            <person name="Madan Babu M."/>
            <person name="Madera M."/>
            <person name="Marchionni L."/>
            <person name="Matsuda H."/>
            <person name="Matsuzawa S."/>
            <person name="Miki H."/>
            <person name="Mignone F."/>
            <person name="Miyake S."/>
            <person name="Morris K."/>
            <person name="Mottagui-Tabar S."/>
            <person name="Mulder N."/>
            <person name="Nakano N."/>
            <person name="Nakauchi H."/>
            <person name="Ng P."/>
            <person name="Nilsson R."/>
            <person name="Nishiguchi S."/>
            <person name="Nishikawa S."/>
            <person name="Nori F."/>
            <person name="Ohara O."/>
            <person name="Okazaki Y."/>
            <person name="Orlando V."/>
            <person name="Pang K.C."/>
            <person name="Pavan W.J."/>
            <person name="Pavesi G."/>
            <person name="Pesole G."/>
            <person name="Petrovsky N."/>
            <person name="Piazza S."/>
            <person name="Reed J."/>
            <person name="Reid J.F."/>
            <person name="Ring B.Z."/>
            <person name="Ringwald M."/>
            <person name="Rost B."/>
            <person name="Ruan Y."/>
            <person name="Salzberg S.L."/>
            <person name="Sandelin A."/>
            <person name="Schneider C."/>
            <person name="Schoenbach C."/>
            <person name="Sekiguchi K."/>
            <person name="Semple C.A."/>
            <person name="Seno S."/>
            <person name="Sessa L."/>
            <person name="Sheng Y."/>
            <person name="Shibata Y."/>
            <person name="Shimada H."/>
            <person name="Shimada K."/>
            <person name="Silva D."/>
            <person name="Sinclair B."/>
            <person name="Sperling S."/>
            <person name="Stupka E."/>
            <person name="Sugiura K."/>
            <person name="Sultana R."/>
            <person name="Takenaka Y."/>
            <person name="Taki K."/>
            <person name="Tammoja K."/>
            <person name="Tan S.L."/>
            <person name="Tang S."/>
            <person name="Taylor M.S."/>
            <person name="Tegner J."/>
            <person name="Teichmann S.A."/>
            <person name="Ueda H.R."/>
            <person name="van Nimwegen E."/>
            <person name="Verardo R."/>
            <person name="Wei C.L."/>
            <person name="Yagi K."/>
            <person name="Yamanishi H."/>
            <person name="Zabarovsky E."/>
            <person name="Zhu S."/>
            <person name="Zimmer A."/>
            <person name="Hide W."/>
            <person name="Bult C."/>
            <person name="Grimmond S.M."/>
            <person name="Teasdale R.D."/>
            <person name="Liu E.T."/>
            <person name="Brusic V."/>
            <person name="Quackenbush J."/>
            <person name="Wahlestedt C."/>
            <person name="Mattick J.S."/>
            <person name="Hume D.A."/>
            <person name="Kai C."/>
            <person name="Sasaki D."/>
            <person name="Tomaru Y."/>
            <person name="Fukuda S."/>
            <person name="Kanamori-Katayama M."/>
            <person name="Suzuki M."/>
            <person name="Aoki J."/>
            <person name="Arakawa T."/>
            <person name="Iida J."/>
            <person name="Imamura K."/>
            <person name="Itoh M."/>
            <person name="Kato T."/>
            <person name="Kawaji H."/>
            <person name="Kawagashira N."/>
            <person name="Kawashima T."/>
            <person name="Kojima M."/>
            <person name="Kondo S."/>
            <person name="Konno H."/>
            <person name="Nakano K."/>
            <person name="Ninomiya N."/>
            <person name="Nishio T."/>
            <person name="Okada M."/>
            <person name="Plessy C."/>
            <person name="Shibata K."/>
            <person name="Shiraki T."/>
            <person name="Suzuki S."/>
            <person name="Tagami M."/>
            <person name="Waki K."/>
            <person name="Watahiki A."/>
            <person name="Okamura-Oho Y."/>
            <person name="Suzuki H."/>
            <person name="Kawai J."/>
            <person name="Hayashizaki Y."/>
        </authorList>
    </citation>
    <scope>NUCLEOTIDE SEQUENCE [LARGE SCALE MRNA]</scope>
    <source>
        <strain>C57BL/6J</strain>
        <strain>NOD</strain>
        <tissue>Thymus</tissue>
        <tissue>Urinary bladder</tissue>
    </source>
</reference>
<reference key="3">
    <citation type="journal article" date="2004" name="Genome Res.">
        <title>The status, quality, and expansion of the NIH full-length cDNA project: the Mammalian Gene Collection (MGC).</title>
        <authorList>
            <consortium name="The MGC Project Team"/>
        </authorList>
    </citation>
    <scope>NUCLEOTIDE SEQUENCE [LARGE SCALE MRNA]</scope>
    <source>
        <strain>C57BL/6J</strain>
        <tissue>Brain</tissue>
        <tissue>Eye</tissue>
    </source>
</reference>
<reference key="4">
    <citation type="journal article" date="2010" name="Cell">
        <title>A tissue-specific atlas of mouse protein phosphorylation and expression.</title>
        <authorList>
            <person name="Huttlin E.L."/>
            <person name="Jedrychowski M.P."/>
            <person name="Elias J.E."/>
            <person name="Goswami T."/>
            <person name="Rad R."/>
            <person name="Beausoleil S.A."/>
            <person name="Villen J."/>
            <person name="Haas W."/>
            <person name="Sowa M.E."/>
            <person name="Gygi S.P."/>
        </authorList>
    </citation>
    <scope>IDENTIFICATION BY MASS SPECTROMETRY [LARGE SCALE ANALYSIS]</scope>
    <source>
        <tissue>Brain</tissue>
        <tissue>Lung</tissue>
        <tissue>Testis</tissue>
    </source>
</reference>
<dbReference type="EMBL" id="AB076382">
    <property type="protein sequence ID" value="BAD23946.1"/>
    <property type="molecule type" value="mRNA"/>
</dbReference>
<dbReference type="EMBL" id="AK079270">
    <property type="protein sequence ID" value="BAC37594.1"/>
    <property type="molecule type" value="mRNA"/>
</dbReference>
<dbReference type="EMBL" id="AK088304">
    <property type="protein sequence ID" value="BAC40271.1"/>
    <property type="molecule type" value="mRNA"/>
</dbReference>
<dbReference type="EMBL" id="AK148049">
    <property type="protein sequence ID" value="BAE28312.1"/>
    <property type="molecule type" value="mRNA"/>
</dbReference>
<dbReference type="EMBL" id="BC086659">
    <property type="protein sequence ID" value="AAH86659.1"/>
    <property type="molecule type" value="mRNA"/>
</dbReference>
<dbReference type="EMBL" id="BC094595">
    <property type="protein sequence ID" value="AAH94595.1"/>
    <property type="molecule type" value="mRNA"/>
</dbReference>
<dbReference type="EMBL" id="BC115842">
    <property type="protein sequence ID" value="AAI15843.1"/>
    <property type="molecule type" value="mRNA"/>
</dbReference>
<dbReference type="CCDS" id="CCDS27429.1"/>
<dbReference type="RefSeq" id="NP_001344935.1">
    <property type="nucleotide sequence ID" value="NM_001358006.1"/>
</dbReference>
<dbReference type="RefSeq" id="NP_001344936.1">
    <property type="nucleotide sequence ID" value="NM_001358007.1"/>
</dbReference>
<dbReference type="RefSeq" id="NP_780343.1">
    <property type="nucleotide sequence ID" value="NM_175134.4"/>
</dbReference>
<dbReference type="RefSeq" id="XP_006520237.1">
    <property type="nucleotide sequence ID" value="XM_006520174.3"/>
</dbReference>
<dbReference type="RefSeq" id="XP_006520238.1">
    <property type="nucleotide sequence ID" value="XM_006520175.2"/>
</dbReference>
<dbReference type="SMR" id="Q8BTZ5"/>
<dbReference type="BioGRID" id="213076">
    <property type="interactions" value="1"/>
</dbReference>
<dbReference type="FunCoup" id="Q8BTZ5">
    <property type="interactions" value="1977"/>
</dbReference>
<dbReference type="STRING" id="10090.ENSMUSP00000052521"/>
<dbReference type="iPTMnet" id="Q8BTZ5"/>
<dbReference type="PhosphoSitePlus" id="Q8BTZ5"/>
<dbReference type="PaxDb" id="10090-ENSMUSP00000052521"/>
<dbReference type="PeptideAtlas" id="Q8BTZ5"/>
<dbReference type="ProteomicsDB" id="282002"/>
<dbReference type="Pumba" id="Q8BTZ5"/>
<dbReference type="Antibodypedia" id="51983">
    <property type="antibodies" value="70 antibodies from 16 providers"/>
</dbReference>
<dbReference type="Ensembl" id="ENSMUST00000057486.9">
    <property type="protein sequence ID" value="ENSMUSP00000052521.8"/>
    <property type="gene ID" value="ENSMUSG00000048307.9"/>
</dbReference>
<dbReference type="GeneID" id="68839"/>
<dbReference type="KEGG" id="mmu:68839"/>
<dbReference type="UCSC" id="uc007vmt.2">
    <property type="organism name" value="mouse"/>
</dbReference>
<dbReference type="AGR" id="MGI:1916089"/>
<dbReference type="CTD" id="157567"/>
<dbReference type="MGI" id="MGI:1916089">
    <property type="gene designation" value="Ankrd46"/>
</dbReference>
<dbReference type="VEuPathDB" id="HostDB:ENSMUSG00000048307"/>
<dbReference type="eggNOG" id="KOG0508">
    <property type="taxonomic scope" value="Eukaryota"/>
</dbReference>
<dbReference type="GeneTree" id="ENSGT00940000157094"/>
<dbReference type="HOGENOM" id="CLU_084801_0_0_1"/>
<dbReference type="InParanoid" id="Q8BTZ5"/>
<dbReference type="OMA" id="EYQGNTA"/>
<dbReference type="OrthoDB" id="21416at2759"/>
<dbReference type="PhylomeDB" id="Q8BTZ5"/>
<dbReference type="TreeFam" id="TF330790"/>
<dbReference type="BioGRID-ORCS" id="68839">
    <property type="hits" value="1 hit in 78 CRISPR screens"/>
</dbReference>
<dbReference type="ChiTaRS" id="Ankrd46">
    <property type="organism name" value="mouse"/>
</dbReference>
<dbReference type="PRO" id="PR:Q8BTZ5"/>
<dbReference type="Proteomes" id="UP000000589">
    <property type="component" value="Chromosome 15"/>
</dbReference>
<dbReference type="RNAct" id="Q8BTZ5">
    <property type="molecule type" value="protein"/>
</dbReference>
<dbReference type="Bgee" id="ENSMUSG00000048307">
    <property type="expression patterns" value="Expressed in dentate gyrus of hippocampal formation granule cell and 272 other cell types or tissues"/>
</dbReference>
<dbReference type="ExpressionAtlas" id="Q8BTZ5">
    <property type="expression patterns" value="baseline and differential"/>
</dbReference>
<dbReference type="GO" id="GO:0016020">
    <property type="term" value="C:membrane"/>
    <property type="evidence" value="ECO:0007669"/>
    <property type="project" value="UniProtKB-SubCell"/>
</dbReference>
<dbReference type="Gene3D" id="1.25.40.20">
    <property type="entry name" value="Ankyrin repeat-containing domain"/>
    <property type="match status" value="1"/>
</dbReference>
<dbReference type="InterPro" id="IPR002110">
    <property type="entry name" value="Ankyrin_rpt"/>
</dbReference>
<dbReference type="InterPro" id="IPR036770">
    <property type="entry name" value="Ankyrin_rpt-contain_sf"/>
</dbReference>
<dbReference type="PANTHER" id="PTHR24171:SF9">
    <property type="entry name" value="ANKYRIN REPEAT DOMAIN-CONTAINING PROTEIN 39"/>
    <property type="match status" value="1"/>
</dbReference>
<dbReference type="PANTHER" id="PTHR24171">
    <property type="entry name" value="ANKYRIN REPEAT DOMAIN-CONTAINING PROTEIN 39-RELATED"/>
    <property type="match status" value="1"/>
</dbReference>
<dbReference type="Pfam" id="PF12796">
    <property type="entry name" value="Ank_2"/>
    <property type="match status" value="1"/>
</dbReference>
<dbReference type="SMART" id="SM00248">
    <property type="entry name" value="ANK"/>
    <property type="match status" value="3"/>
</dbReference>
<dbReference type="SUPFAM" id="SSF48403">
    <property type="entry name" value="Ankyrin repeat"/>
    <property type="match status" value="1"/>
</dbReference>
<dbReference type="PROSITE" id="PS50297">
    <property type="entry name" value="ANK_REP_REGION"/>
    <property type="match status" value="1"/>
</dbReference>
<dbReference type="PROSITE" id="PS50088">
    <property type="entry name" value="ANK_REPEAT"/>
    <property type="match status" value="2"/>
</dbReference>
<name>ANR46_MOUSE</name>